<keyword id="KW-0349">Heme</keyword>
<keyword id="KW-0408">Iron</keyword>
<keyword id="KW-0472">Membrane</keyword>
<keyword id="KW-0479">Metal-binding</keyword>
<keyword id="KW-0503">Monooxygenase</keyword>
<keyword id="KW-0560">Oxidoreductase</keyword>
<keyword id="KW-0611">Plant defense</keyword>
<keyword id="KW-1185">Reference proteome</keyword>
<keyword id="KW-0812">Transmembrane</keyword>
<keyword id="KW-1133">Transmembrane helix</keyword>
<sequence>MENSQVWLLWGALSVAVLFYLSTLRRRHAGGKPLPPGPTPLPLIGNLHLAGGTSFHHKLRDLARVHGPVMTLKLGLATNVVISSREAAIEAYTKYDRHLAARATPDTFRACGFADRSMVFIPSSDPRWKALRGIQGSHVFTPRGLAAVRPIRERKVGDLMAYLRAHAGEEVLLGQAMHTGLLNLVSFSYFSIDIVDMGSQMARDLREVVDDIISVVGKPNISDFYPFLRPLDLQGLRRWTTKRFNRVFSIMGDIIDRRLAHIRDNKPSHNDFLDSLLELMAAGKIDRVNVLDMLFEAFVAGADTMALTLEWVMAELLKNPGVMAKARAELRDVLGDKEVVEEADAARLPYLQAVLKEAMRLHPVGALLLPHFAVEDGVEVGGYAVPKGSTVLFNAWAIMRDPAAWERPDEFVPERFVERAPLLDFRGKDAEFMPFGSGRRLCPGLPLAERVMPFILASMLHTFEWKLPGGMTAEDVDVSEKFKSANVLAVPLKAVPVLIK</sequence>
<reference key="1">
    <citation type="journal article" date="2005" name="Nature">
        <title>The map-based sequence of the rice genome.</title>
        <authorList>
            <consortium name="International rice genome sequencing project (IRGSP)"/>
        </authorList>
    </citation>
    <scope>NUCLEOTIDE SEQUENCE [LARGE SCALE GENOMIC DNA]</scope>
    <source>
        <strain>cv. Nipponbare</strain>
    </source>
</reference>
<reference key="2">
    <citation type="journal article" date="2008" name="Nucleic Acids Res.">
        <title>The rice annotation project database (RAP-DB): 2008 update.</title>
        <authorList>
            <consortium name="The rice annotation project (RAP)"/>
        </authorList>
    </citation>
    <scope>GENOME REANNOTATION</scope>
    <source>
        <strain>cv. Nipponbare</strain>
    </source>
</reference>
<reference key="3">
    <citation type="journal article" date="2013" name="Rice">
        <title>Improvement of the Oryza sativa Nipponbare reference genome using next generation sequence and optical map data.</title>
        <authorList>
            <person name="Kawahara Y."/>
            <person name="de la Bastide M."/>
            <person name="Hamilton J.P."/>
            <person name="Kanamori H."/>
            <person name="McCombie W.R."/>
            <person name="Ouyang S."/>
            <person name="Schwartz D.C."/>
            <person name="Tanaka T."/>
            <person name="Wu J."/>
            <person name="Zhou S."/>
            <person name="Childs K.L."/>
            <person name="Davidson R.M."/>
            <person name="Lin H."/>
            <person name="Quesada-Ocampo L."/>
            <person name="Vaillancourt B."/>
            <person name="Sakai H."/>
            <person name="Lee S.S."/>
            <person name="Kim J."/>
            <person name="Numa H."/>
            <person name="Itoh T."/>
            <person name="Buell C.R."/>
            <person name="Matsumoto T."/>
        </authorList>
    </citation>
    <scope>GENOME REANNOTATION</scope>
    <source>
        <strain>cv. Nipponbare</strain>
    </source>
</reference>
<reference key="4">
    <citation type="journal article" date="2005" name="PLoS Biol.">
        <title>The genomes of Oryza sativa: a history of duplications.</title>
        <authorList>
            <person name="Yu J."/>
            <person name="Wang J."/>
            <person name="Lin W."/>
            <person name="Li S."/>
            <person name="Li H."/>
            <person name="Zhou J."/>
            <person name="Ni P."/>
            <person name="Dong W."/>
            <person name="Hu S."/>
            <person name="Zeng C."/>
            <person name="Zhang J."/>
            <person name="Zhang Y."/>
            <person name="Li R."/>
            <person name="Xu Z."/>
            <person name="Li S."/>
            <person name="Li X."/>
            <person name="Zheng H."/>
            <person name="Cong L."/>
            <person name="Lin L."/>
            <person name="Yin J."/>
            <person name="Geng J."/>
            <person name="Li G."/>
            <person name="Shi J."/>
            <person name="Liu J."/>
            <person name="Lv H."/>
            <person name="Li J."/>
            <person name="Wang J."/>
            <person name="Deng Y."/>
            <person name="Ran L."/>
            <person name="Shi X."/>
            <person name="Wang X."/>
            <person name="Wu Q."/>
            <person name="Li C."/>
            <person name="Ren X."/>
            <person name="Wang J."/>
            <person name="Wang X."/>
            <person name="Li D."/>
            <person name="Liu D."/>
            <person name="Zhang X."/>
            <person name="Ji Z."/>
            <person name="Zhao W."/>
            <person name="Sun Y."/>
            <person name="Zhang Z."/>
            <person name="Bao J."/>
            <person name="Han Y."/>
            <person name="Dong L."/>
            <person name="Ji J."/>
            <person name="Chen P."/>
            <person name="Wu S."/>
            <person name="Liu J."/>
            <person name="Xiao Y."/>
            <person name="Bu D."/>
            <person name="Tan J."/>
            <person name="Yang L."/>
            <person name="Ye C."/>
            <person name="Zhang J."/>
            <person name="Xu J."/>
            <person name="Zhou Y."/>
            <person name="Yu Y."/>
            <person name="Zhang B."/>
            <person name="Zhuang S."/>
            <person name="Wei H."/>
            <person name="Liu B."/>
            <person name="Lei M."/>
            <person name="Yu H."/>
            <person name="Li Y."/>
            <person name="Xu H."/>
            <person name="Wei S."/>
            <person name="He X."/>
            <person name="Fang L."/>
            <person name="Zhang Z."/>
            <person name="Zhang Y."/>
            <person name="Huang X."/>
            <person name="Su Z."/>
            <person name="Tong W."/>
            <person name="Li J."/>
            <person name="Tong Z."/>
            <person name="Li S."/>
            <person name="Ye J."/>
            <person name="Wang L."/>
            <person name="Fang L."/>
            <person name="Lei T."/>
            <person name="Chen C.-S."/>
            <person name="Chen H.-C."/>
            <person name="Xu Z."/>
            <person name="Li H."/>
            <person name="Huang H."/>
            <person name="Zhang F."/>
            <person name="Xu H."/>
            <person name="Li N."/>
            <person name="Zhao C."/>
            <person name="Li S."/>
            <person name="Dong L."/>
            <person name="Huang Y."/>
            <person name="Li L."/>
            <person name="Xi Y."/>
            <person name="Qi Q."/>
            <person name="Li W."/>
            <person name="Zhang B."/>
            <person name="Hu W."/>
            <person name="Zhang Y."/>
            <person name="Tian X."/>
            <person name="Jiao Y."/>
            <person name="Liang X."/>
            <person name="Jin J."/>
            <person name="Gao L."/>
            <person name="Zheng W."/>
            <person name="Hao B."/>
            <person name="Liu S.-M."/>
            <person name="Wang W."/>
            <person name="Yuan L."/>
            <person name="Cao M."/>
            <person name="McDermott J."/>
            <person name="Samudrala R."/>
            <person name="Wang J."/>
            <person name="Wong G.K.-S."/>
            <person name="Yang H."/>
        </authorList>
    </citation>
    <scope>NUCLEOTIDE SEQUENCE [LARGE SCALE GENOMIC DNA]</scope>
    <source>
        <strain>cv. Nipponbare</strain>
    </source>
</reference>
<reference key="5">
    <citation type="submission" date="2008-11" db="EMBL/GenBank/DDBJ databases">
        <title>Oryza sativa full length cDNA.</title>
        <authorList>
            <consortium name="The rice full-length cDNA consortium"/>
        </authorList>
    </citation>
    <scope>NUCLEOTIDE SEQUENCE [LARGE SCALE MRNA]</scope>
    <source>
        <strain>cv. Nipponbare</strain>
    </source>
</reference>
<reference key="6">
    <citation type="journal article" date="2002" name="Sci. China, Ser. C, Life Sci.">
        <title>Putative cytochrome P450 genes in rice genome (Oryza sativa L. ssp. indica) and their EST evidence.</title>
        <authorList>
            <person name="Zhong L."/>
            <person name="Wang K."/>
            <person name="Tan J."/>
            <person name="Li W."/>
            <person name="Li S."/>
        </authorList>
    </citation>
    <scope>GENE FAMILY</scope>
    <scope>NOMENCLATURE</scope>
</reference>
<reference key="7">
    <citation type="journal article" date="2009" name="Plant Cell">
        <title>CYP76M7 is an ent-cassadiene C11alpha-hydroxylase defining a second multifunctional diterpenoid biosynthetic gene cluster in rice.</title>
        <authorList>
            <person name="Swaminathan S."/>
            <person name="Morrone D."/>
            <person name="Wang Q."/>
            <person name="Fulton D.B."/>
            <person name="Peters R.J."/>
        </authorList>
    </citation>
    <scope>FUNCTION</scope>
    <scope>CATALYTIC ACTIVITY</scope>
    <scope>BIOPHYSICOCHEMICAL PROPERTIES</scope>
</reference>
<reference key="8">
    <citation type="journal article" date="2011" name="FEBS Lett.">
        <title>Parsing a multifunctional biosynthetic gene cluster from rice: Biochemical characterization of CYP71Z6 &amp; 7.</title>
        <authorList>
            <person name="Wu Y."/>
            <person name="Hillwig M.L."/>
            <person name="Wang Q."/>
            <person name="Peters R.J."/>
        </authorList>
    </citation>
    <scope>FUNCTION</scope>
    <scope>CATALYTIC ACTIVITY</scope>
</reference>
<reference key="9">
    <citation type="journal article" date="2012" name="J. Biol. Chem.">
        <title>Characterization of CYP76M5-8 indicates metabolic plasticity within a plant biosynthetic gene cluster.</title>
        <authorList>
            <person name="Wang Q."/>
            <person name="Hillwig M.L."/>
            <person name="Okada K."/>
            <person name="Yamazaki K."/>
            <person name="Wu Y."/>
            <person name="Swaminathan S."/>
            <person name="Yamane H."/>
            <person name="Peters R.J."/>
        </authorList>
    </citation>
    <scope>FUNCTION</scope>
    <scope>CATALYTIC ACTIVITY</scope>
    <scope>INDUCTION BY METHYL JASMONATE</scope>
</reference>
<organism>
    <name type="scientific">Oryza sativa subsp. japonica</name>
    <name type="common">Rice</name>
    <dbReference type="NCBI Taxonomy" id="39947"/>
    <lineage>
        <taxon>Eukaryota</taxon>
        <taxon>Viridiplantae</taxon>
        <taxon>Streptophyta</taxon>
        <taxon>Embryophyta</taxon>
        <taxon>Tracheophyta</taxon>
        <taxon>Spermatophyta</taxon>
        <taxon>Magnoliopsida</taxon>
        <taxon>Liliopsida</taxon>
        <taxon>Poales</taxon>
        <taxon>Poaceae</taxon>
        <taxon>BOP clade</taxon>
        <taxon>Oryzoideae</taxon>
        <taxon>Oryzeae</taxon>
        <taxon>Oryzinae</taxon>
        <taxon>Oryza</taxon>
        <taxon>Oryza sativa</taxon>
    </lineage>
</organism>
<proteinExistence type="evidence at protein level"/>
<dbReference type="EC" id="1.14.14.112" evidence="3 4 5"/>
<dbReference type="EMBL" id="AP003623">
    <property type="protein sequence ID" value="BAD32943.1"/>
    <property type="molecule type" value="Genomic_DNA"/>
</dbReference>
<dbReference type="EMBL" id="AP008212">
    <property type="protein sequence ID" value="BAF19912.1"/>
    <property type="molecule type" value="Genomic_DNA"/>
</dbReference>
<dbReference type="EMBL" id="AP014962">
    <property type="protein sequence ID" value="BAS98483.1"/>
    <property type="molecule type" value="Genomic_DNA"/>
</dbReference>
<dbReference type="EMBL" id="CM000143">
    <property type="protein sequence ID" value="EAZ37547.1"/>
    <property type="status" value="ALT_SEQ"/>
    <property type="molecule type" value="Genomic_DNA"/>
</dbReference>
<dbReference type="EMBL" id="AK318614">
    <property type="status" value="NOT_ANNOTATED_CDS"/>
    <property type="molecule type" value="mRNA"/>
</dbReference>
<dbReference type="RefSeq" id="XP_015641474.1">
    <property type="nucleotide sequence ID" value="XM_015785988.1"/>
</dbReference>
<dbReference type="SMR" id="Q69X58"/>
<dbReference type="FunCoup" id="Q69X58">
    <property type="interactions" value="478"/>
</dbReference>
<dbReference type="STRING" id="39947.Q69X58"/>
<dbReference type="PaxDb" id="39947-Q69X58"/>
<dbReference type="EnsemblPlants" id="Os06t0599200-01">
    <property type="protein sequence ID" value="Os06t0599200-01"/>
    <property type="gene ID" value="Os06g0599200"/>
</dbReference>
<dbReference type="Gramene" id="Os06t0599200-01">
    <property type="protein sequence ID" value="Os06t0599200-01"/>
    <property type="gene ID" value="Os06g0599200"/>
</dbReference>
<dbReference type="KEGG" id="dosa:Os06g0599200"/>
<dbReference type="eggNOG" id="KOG0156">
    <property type="taxonomic scope" value="Eukaryota"/>
</dbReference>
<dbReference type="HOGENOM" id="CLU_001570_4_2_1"/>
<dbReference type="InParanoid" id="Q69X58"/>
<dbReference type="OMA" id="GKDAEFM"/>
<dbReference type="OrthoDB" id="686267at2759"/>
<dbReference type="BioCyc" id="MetaCyc:MONOMER-18619"/>
<dbReference type="SABIO-RK" id="Q69X58"/>
<dbReference type="Proteomes" id="UP000000763">
    <property type="component" value="Chromosome 6"/>
</dbReference>
<dbReference type="Proteomes" id="UP000007752">
    <property type="component" value="Chromosome 6"/>
</dbReference>
<dbReference type="Proteomes" id="UP000059680">
    <property type="component" value="Chromosome 6"/>
</dbReference>
<dbReference type="GO" id="GO:0016020">
    <property type="term" value="C:membrane"/>
    <property type="evidence" value="ECO:0000318"/>
    <property type="project" value="GO_Central"/>
</dbReference>
<dbReference type="GO" id="GO:0036202">
    <property type="term" value="F:ent-cassa-12,15-diene 11-hydroxylase activity"/>
    <property type="evidence" value="ECO:0000314"/>
    <property type="project" value="UniProtKB"/>
</dbReference>
<dbReference type="GO" id="GO:0020037">
    <property type="term" value="F:heme binding"/>
    <property type="evidence" value="ECO:0007669"/>
    <property type="project" value="InterPro"/>
</dbReference>
<dbReference type="GO" id="GO:0005506">
    <property type="term" value="F:iron ion binding"/>
    <property type="evidence" value="ECO:0007669"/>
    <property type="project" value="InterPro"/>
</dbReference>
<dbReference type="GO" id="GO:0004497">
    <property type="term" value="F:monooxygenase activity"/>
    <property type="evidence" value="ECO:0000314"/>
    <property type="project" value="UniProtKB"/>
</dbReference>
<dbReference type="GO" id="GO:0016491">
    <property type="term" value="F:oxidoreductase activity"/>
    <property type="evidence" value="ECO:0000314"/>
    <property type="project" value="UniProtKB"/>
</dbReference>
<dbReference type="GO" id="GO:0016709">
    <property type="term" value="F:oxidoreductase activity, acting on paired donors, with incorporation or reduction of molecular oxygen, NAD(P)H as one donor, and incorporation of one atom of oxygen"/>
    <property type="evidence" value="ECO:0000318"/>
    <property type="project" value="GO_Central"/>
</dbReference>
<dbReference type="GO" id="GO:0006952">
    <property type="term" value="P:defense response"/>
    <property type="evidence" value="ECO:0007669"/>
    <property type="project" value="UniProtKB-KW"/>
</dbReference>
<dbReference type="GO" id="GO:0051502">
    <property type="term" value="P:diterpene phytoalexin biosynthetic process"/>
    <property type="evidence" value="ECO:0000314"/>
    <property type="project" value="UniProtKB"/>
</dbReference>
<dbReference type="GO" id="GO:0016102">
    <property type="term" value="P:diterpenoid biosynthetic process"/>
    <property type="evidence" value="ECO:0000314"/>
    <property type="project" value="UniProtKB"/>
</dbReference>
<dbReference type="CDD" id="cd11073">
    <property type="entry name" value="CYP76-like"/>
    <property type="match status" value="1"/>
</dbReference>
<dbReference type="FunFam" id="1.10.630.10:FF:000007">
    <property type="entry name" value="Cytochrome P450 76C4"/>
    <property type="match status" value="1"/>
</dbReference>
<dbReference type="Gene3D" id="1.10.630.10">
    <property type="entry name" value="Cytochrome P450"/>
    <property type="match status" value="1"/>
</dbReference>
<dbReference type="InterPro" id="IPR001128">
    <property type="entry name" value="Cyt_P450"/>
</dbReference>
<dbReference type="InterPro" id="IPR017972">
    <property type="entry name" value="Cyt_P450_CS"/>
</dbReference>
<dbReference type="InterPro" id="IPR002401">
    <property type="entry name" value="Cyt_P450_E_grp-I"/>
</dbReference>
<dbReference type="InterPro" id="IPR036396">
    <property type="entry name" value="Cyt_P450_sf"/>
</dbReference>
<dbReference type="PANTHER" id="PTHR47950:SF48">
    <property type="entry name" value="CYTOCHROME P450 FAMILY PROTEIN, EXPRESSED"/>
    <property type="match status" value="1"/>
</dbReference>
<dbReference type="PANTHER" id="PTHR47950">
    <property type="entry name" value="CYTOCHROME P450, FAMILY 76, SUBFAMILY C, POLYPEPTIDE 5-RELATED"/>
    <property type="match status" value="1"/>
</dbReference>
<dbReference type="Pfam" id="PF00067">
    <property type="entry name" value="p450"/>
    <property type="match status" value="1"/>
</dbReference>
<dbReference type="PRINTS" id="PR00463">
    <property type="entry name" value="EP450I"/>
</dbReference>
<dbReference type="PRINTS" id="PR00385">
    <property type="entry name" value="P450"/>
</dbReference>
<dbReference type="SUPFAM" id="SSF48264">
    <property type="entry name" value="Cytochrome P450"/>
    <property type="match status" value="1"/>
</dbReference>
<dbReference type="PROSITE" id="PS00086">
    <property type="entry name" value="CYTOCHROME_P450"/>
    <property type="match status" value="1"/>
</dbReference>
<comment type="function">
    <text evidence="3 4 5">Enzyme of the diterpenoid metabolism involved in the biosynthesis of antibacterial oryzalides such as phytocassane. Can use ent-cassadiene as substrate, but not C11-alpha-hydroxy-ent-cassadiene, ent-pimaradiene, ent-sandaracopimaradiene, ent-kaurene, ent-isokaurene, syn-pimaradiene, syn-stemarene, syn-stemodene.</text>
</comment>
<comment type="catalytic activity">
    <reaction evidence="3 4 5">
        <text>ent-cassa-12,15-diene + reduced [NADPH--hemoprotein reductase] + O2 = ent-11beta-hydroxycassa-12,15-diene + oxidized [NADPH--hemoprotein reductase] + H2O + H(+)</text>
        <dbReference type="Rhea" id="RHEA:31967"/>
        <dbReference type="Rhea" id="RHEA-COMP:11964"/>
        <dbReference type="Rhea" id="RHEA-COMP:11965"/>
        <dbReference type="ChEBI" id="CHEBI:15377"/>
        <dbReference type="ChEBI" id="CHEBI:15378"/>
        <dbReference type="ChEBI" id="CHEBI:15379"/>
        <dbReference type="ChEBI" id="CHEBI:50060"/>
        <dbReference type="ChEBI" id="CHEBI:57618"/>
        <dbReference type="ChEBI" id="CHEBI:58210"/>
        <dbReference type="ChEBI" id="CHEBI:63662"/>
        <dbReference type="EC" id="1.14.14.112"/>
    </reaction>
</comment>
<comment type="cofactor">
    <cofactor evidence="1">
        <name>heme</name>
        <dbReference type="ChEBI" id="CHEBI:30413"/>
    </cofactor>
</comment>
<comment type="biophysicochemical properties">
    <kinetics>
        <KM evidence="3">39 uM for Ent-cassa-12,15-diene</KM>
        <Vmax evidence="3">0.13 umol/min/mg enzyme</Vmax>
    </kinetics>
</comment>
<comment type="subcellular location">
    <subcellularLocation>
        <location evidence="7">Membrane</location>
        <topology evidence="7">Single-pass membrane protein</topology>
    </subcellularLocation>
</comment>
<comment type="induction">
    <text evidence="5">Up-regulated by methyl jasmonate.</text>
</comment>
<comment type="similarity">
    <text evidence="7">Belongs to the cytochrome P450 family.</text>
</comment>
<comment type="sequence caution" evidence="7">
    <conflict type="erroneous gene model prediction">
        <sequence resource="EMBL-CDS" id="EAZ37547"/>
    </conflict>
</comment>
<comment type="online information" name="Cytochrome P450 Homepage">
    <link uri="https://drnelson.uthsc.edu/"/>
</comment>
<name>C76M7_ORYSJ</name>
<accession>Q69X58</accession>
<accession>A0A0P0WYD0</accession>
<accession>A3BDA8</accession>
<protein>
    <recommendedName>
        <fullName>Ent-cassadiene C11-alpha-hydroxylase 1</fullName>
        <ecNumber evidence="3 4 5">1.14.14.112</ecNumber>
    </recommendedName>
    <alternativeName>
        <fullName evidence="6">Cytochrome P450 76M7</fullName>
    </alternativeName>
</protein>
<gene>
    <name evidence="6" type="primary">CYP76M7</name>
    <name evidence="9" type="ordered locus">Os06g0599200</name>
    <name evidence="7" type="ordered locus">LOC_Os06g39780</name>
    <name type="ORF">OsJ_07204</name>
    <name evidence="10" type="ORF">OsJ_21875</name>
    <name type="ORF">OSJNBa0008E01.17</name>
    <name type="ORF">P0025F02.46</name>
    <name evidence="8" type="ORF">P0642B07.53</name>
</gene>
<evidence type="ECO:0000250" key="1">
    <source>
        <dbReference type="UniProtKB" id="P04798"/>
    </source>
</evidence>
<evidence type="ECO:0000255" key="2"/>
<evidence type="ECO:0000269" key="3">
    <source>
    </source>
</evidence>
<evidence type="ECO:0000269" key="4">
    <source>
    </source>
</evidence>
<evidence type="ECO:0000269" key="5">
    <source>
    </source>
</evidence>
<evidence type="ECO:0000303" key="6">
    <source>
    </source>
</evidence>
<evidence type="ECO:0000305" key="7"/>
<evidence type="ECO:0000312" key="8">
    <source>
        <dbReference type="EMBL" id="BAD32943.1"/>
    </source>
</evidence>
<evidence type="ECO:0000312" key="9">
    <source>
        <dbReference type="EMBL" id="BAF19912.1"/>
    </source>
</evidence>
<evidence type="ECO:0000312" key="10">
    <source>
        <dbReference type="EMBL" id="EAZ37547.1"/>
    </source>
</evidence>
<feature type="chain" id="PRO_0000418866" description="Ent-cassadiene C11-alpha-hydroxylase 1">
    <location>
        <begin position="1"/>
        <end position="500"/>
    </location>
</feature>
<feature type="transmembrane region" description="Helical" evidence="2">
    <location>
        <begin position="4"/>
        <end position="24"/>
    </location>
</feature>
<feature type="binding site" description="axial binding residue" evidence="1">
    <location>
        <position position="442"/>
    </location>
    <ligand>
        <name>heme</name>
        <dbReference type="ChEBI" id="CHEBI:30413"/>
    </ligand>
    <ligandPart>
        <name>Fe</name>
        <dbReference type="ChEBI" id="CHEBI:18248"/>
    </ligandPart>
</feature>
<feature type="sequence conflict" description="In Ref. 4; EAZ37547." ref="4">
    <original>F</original>
    <variation>C</variation>
    <location>
        <position position="372"/>
    </location>
</feature>